<name>RL4_THEP3</name>
<reference key="1">
    <citation type="submission" date="2008-01" db="EMBL/GenBank/DDBJ databases">
        <title>Complete sequence of Thermoanaerobacter pseudethanolicus 39E.</title>
        <authorList>
            <person name="Copeland A."/>
            <person name="Lucas S."/>
            <person name="Lapidus A."/>
            <person name="Barry K."/>
            <person name="Glavina del Rio T."/>
            <person name="Dalin E."/>
            <person name="Tice H."/>
            <person name="Pitluck S."/>
            <person name="Bruce D."/>
            <person name="Goodwin L."/>
            <person name="Saunders E."/>
            <person name="Brettin T."/>
            <person name="Detter J.C."/>
            <person name="Han C."/>
            <person name="Schmutz J."/>
            <person name="Larimer F."/>
            <person name="Land M."/>
            <person name="Hauser L."/>
            <person name="Kyrpides N."/>
            <person name="Lykidis A."/>
            <person name="Hemme C."/>
            <person name="Fields M.W."/>
            <person name="He Z."/>
            <person name="Zhou J."/>
            <person name="Richardson P."/>
        </authorList>
    </citation>
    <scope>NUCLEOTIDE SEQUENCE [LARGE SCALE GENOMIC DNA]</scope>
    <source>
        <strain>ATCC 33223 / DSM 2355 / 39E</strain>
    </source>
</reference>
<sequence>MPKVAVYNVKGEQVGEIELKDSVFGVPVNVPVMHEAVLNYLANQRQGTHSTKTRGEVRGGGRKPWRQKGTGRARQGSIRAPQWIKGGIVFGPKPRDYSYKLPKKVKRLALKSALSSKVRDNEIIVLDEFKLDQPKTKKVVELLKNFNVDSALIVVPEGEKNVELSARNIPGVKTLYANYLNTYDILKYDKFIITKDAVGIVEEVYA</sequence>
<gene>
    <name evidence="1" type="primary">rplD</name>
    <name type="ordered locus">Teth39_0375</name>
</gene>
<organism>
    <name type="scientific">Thermoanaerobacter pseudethanolicus (strain ATCC 33223 / 39E)</name>
    <name type="common">Clostridium thermohydrosulfuricum</name>
    <dbReference type="NCBI Taxonomy" id="340099"/>
    <lineage>
        <taxon>Bacteria</taxon>
        <taxon>Bacillati</taxon>
        <taxon>Bacillota</taxon>
        <taxon>Clostridia</taxon>
        <taxon>Thermoanaerobacterales</taxon>
        <taxon>Thermoanaerobacteraceae</taxon>
        <taxon>Thermoanaerobacter</taxon>
    </lineage>
</organism>
<dbReference type="EMBL" id="CP000924">
    <property type="protein sequence ID" value="ABY94044.1"/>
    <property type="molecule type" value="Genomic_DNA"/>
</dbReference>
<dbReference type="RefSeq" id="WP_003868561.1">
    <property type="nucleotide sequence ID" value="NC_010321.1"/>
</dbReference>
<dbReference type="SMR" id="B0KCK1"/>
<dbReference type="STRING" id="340099.Teth39_0375"/>
<dbReference type="KEGG" id="tpd:Teth39_0375"/>
<dbReference type="eggNOG" id="COG0088">
    <property type="taxonomic scope" value="Bacteria"/>
</dbReference>
<dbReference type="HOGENOM" id="CLU_041575_5_2_9"/>
<dbReference type="Proteomes" id="UP000002156">
    <property type="component" value="Chromosome"/>
</dbReference>
<dbReference type="GO" id="GO:1990904">
    <property type="term" value="C:ribonucleoprotein complex"/>
    <property type="evidence" value="ECO:0007669"/>
    <property type="project" value="UniProtKB-KW"/>
</dbReference>
<dbReference type="GO" id="GO:0005840">
    <property type="term" value="C:ribosome"/>
    <property type="evidence" value="ECO:0007669"/>
    <property type="project" value="UniProtKB-KW"/>
</dbReference>
<dbReference type="GO" id="GO:0019843">
    <property type="term" value="F:rRNA binding"/>
    <property type="evidence" value="ECO:0007669"/>
    <property type="project" value="UniProtKB-UniRule"/>
</dbReference>
<dbReference type="GO" id="GO:0003735">
    <property type="term" value="F:structural constituent of ribosome"/>
    <property type="evidence" value="ECO:0007669"/>
    <property type="project" value="InterPro"/>
</dbReference>
<dbReference type="GO" id="GO:0006412">
    <property type="term" value="P:translation"/>
    <property type="evidence" value="ECO:0007669"/>
    <property type="project" value="UniProtKB-UniRule"/>
</dbReference>
<dbReference type="Gene3D" id="3.40.1370.10">
    <property type="match status" value="1"/>
</dbReference>
<dbReference type="HAMAP" id="MF_01328_B">
    <property type="entry name" value="Ribosomal_uL4_B"/>
    <property type="match status" value="1"/>
</dbReference>
<dbReference type="InterPro" id="IPR002136">
    <property type="entry name" value="Ribosomal_uL4"/>
</dbReference>
<dbReference type="InterPro" id="IPR013005">
    <property type="entry name" value="Ribosomal_uL4-like"/>
</dbReference>
<dbReference type="InterPro" id="IPR023574">
    <property type="entry name" value="Ribosomal_uL4_dom_sf"/>
</dbReference>
<dbReference type="NCBIfam" id="TIGR03953">
    <property type="entry name" value="rplD_bact"/>
    <property type="match status" value="1"/>
</dbReference>
<dbReference type="PANTHER" id="PTHR10746">
    <property type="entry name" value="50S RIBOSOMAL PROTEIN L4"/>
    <property type="match status" value="1"/>
</dbReference>
<dbReference type="PANTHER" id="PTHR10746:SF6">
    <property type="entry name" value="LARGE RIBOSOMAL SUBUNIT PROTEIN UL4M"/>
    <property type="match status" value="1"/>
</dbReference>
<dbReference type="Pfam" id="PF00573">
    <property type="entry name" value="Ribosomal_L4"/>
    <property type="match status" value="1"/>
</dbReference>
<dbReference type="SUPFAM" id="SSF52166">
    <property type="entry name" value="Ribosomal protein L4"/>
    <property type="match status" value="1"/>
</dbReference>
<keyword id="KW-1185">Reference proteome</keyword>
<keyword id="KW-0687">Ribonucleoprotein</keyword>
<keyword id="KW-0689">Ribosomal protein</keyword>
<keyword id="KW-0694">RNA-binding</keyword>
<keyword id="KW-0699">rRNA-binding</keyword>
<comment type="function">
    <text evidence="1">One of the primary rRNA binding proteins, this protein initially binds near the 5'-end of the 23S rRNA. It is important during the early stages of 50S assembly. It makes multiple contacts with different domains of the 23S rRNA in the assembled 50S subunit and ribosome.</text>
</comment>
<comment type="function">
    <text evidence="1">Forms part of the polypeptide exit tunnel.</text>
</comment>
<comment type="subunit">
    <text evidence="1">Part of the 50S ribosomal subunit.</text>
</comment>
<comment type="similarity">
    <text evidence="1">Belongs to the universal ribosomal protein uL4 family.</text>
</comment>
<feature type="chain" id="PRO_1000142198" description="Large ribosomal subunit protein uL4">
    <location>
        <begin position="1"/>
        <end position="206"/>
    </location>
</feature>
<feature type="region of interest" description="Disordered" evidence="2">
    <location>
        <begin position="45"/>
        <end position="75"/>
    </location>
</feature>
<feature type="compositionally biased region" description="Basic residues" evidence="2">
    <location>
        <begin position="60"/>
        <end position="71"/>
    </location>
</feature>
<accession>B0KCK1</accession>
<proteinExistence type="inferred from homology"/>
<protein>
    <recommendedName>
        <fullName evidence="1">Large ribosomal subunit protein uL4</fullName>
    </recommendedName>
    <alternativeName>
        <fullName evidence="3">50S ribosomal protein L4</fullName>
    </alternativeName>
</protein>
<evidence type="ECO:0000255" key="1">
    <source>
        <dbReference type="HAMAP-Rule" id="MF_01328"/>
    </source>
</evidence>
<evidence type="ECO:0000256" key="2">
    <source>
        <dbReference type="SAM" id="MobiDB-lite"/>
    </source>
</evidence>
<evidence type="ECO:0000305" key="3"/>